<comment type="interaction">
    <interactant intactId="EBI-8473670">
        <id>O95447</id>
    </interactant>
    <interactant intactId="EBI-17264467">
        <id>P05067-2</id>
        <label>APP</label>
    </interactant>
    <organismsDiffer>false</organismsDiffer>
    <experiments>3</experiments>
</comment>
<comment type="interaction">
    <interactant intactId="EBI-8473670">
        <id>O95447</id>
    </interactant>
    <interactant intactId="EBI-930964">
        <id>P54253</id>
        <label>ATXN1</label>
    </interactant>
    <organismsDiffer>false</organismsDiffer>
    <experiments>3</experiments>
</comment>
<comment type="interaction">
    <interactant intactId="EBI-8473670">
        <id>O95447</id>
    </interactant>
    <interactant intactId="EBI-750686">
        <id>Q8NCU1</id>
        <label>CCDC197</label>
    </interactant>
    <organismsDiffer>false</organismsDiffer>
    <experiments>3</experiments>
</comment>
<comment type="interaction">
    <interactant intactId="EBI-8473670">
        <id>O95447</id>
    </interactant>
    <interactant intactId="EBI-371876">
        <id>Q9NQT4</id>
        <label>EXOSC5</label>
    </interactant>
    <organismsDiffer>false</organismsDiffer>
    <experiments>3</experiments>
</comment>
<comment type="interaction">
    <interactant intactId="EBI-8473670">
        <id>O95447</id>
    </interactant>
    <interactant intactId="EBI-11958845">
        <id>O94868-3</id>
        <label>FCHSD2</label>
    </interactant>
    <organismsDiffer>false</organismsDiffer>
    <experiments>3</experiments>
</comment>
<comment type="interaction">
    <interactant intactId="EBI-8473670">
        <id>O95447</id>
    </interactant>
    <interactant intactId="EBI-747754">
        <id>P28799</id>
        <label>GRN</label>
    </interactant>
    <organismsDiffer>false</organismsDiffer>
    <experiments>3</experiments>
</comment>
<comment type="interaction">
    <interactant intactId="EBI-8473670">
        <id>O95447</id>
    </interactant>
    <interactant intactId="EBI-466029">
        <id>P42858</id>
        <label>HTT</label>
    </interactant>
    <organismsDiffer>false</organismsDiffer>
    <experiments>18</experiments>
</comment>
<comment type="interaction">
    <interactant intactId="EBI-8473670">
        <id>O95447</id>
    </interactant>
    <interactant intactId="EBI-12190633">
        <id>Q70UQ0-4</id>
        <label>IKBIP</label>
    </interactant>
    <organismsDiffer>false</organismsDiffer>
    <experiments>3</experiments>
</comment>
<comment type="interaction">
    <interactant intactId="EBI-8473670">
        <id>O95447</id>
    </interactant>
    <interactant intactId="EBI-10975473">
        <id>O60333-2</id>
        <label>KIF1B</label>
    </interactant>
    <organismsDiffer>false</organismsDiffer>
    <experiments>3</experiments>
</comment>
<comment type="interaction">
    <interactant intactId="EBI-8473670">
        <id>O95447</id>
    </interactant>
    <interactant intactId="EBI-2949715">
        <id>O95678</id>
        <label>KRT75</label>
    </interactant>
    <organismsDiffer>false</organismsDiffer>
    <experiments>3</experiments>
</comment>
<comment type="interaction">
    <interactant intactId="EBI-8473670">
        <id>O95447</id>
    </interactant>
    <interactant intactId="EBI-2952745">
        <id>Q01546</id>
        <label>KRT76</label>
    </interactant>
    <organismsDiffer>false</organismsDiffer>
    <experiments>3</experiments>
</comment>
<comment type="interaction">
    <interactant intactId="EBI-8473670">
        <id>O95447</id>
    </interactant>
    <interactant intactId="EBI-11999246">
        <id>Q6KB66-2</id>
        <label>KRT80</label>
    </interactant>
    <organismsDiffer>false</organismsDiffer>
    <experiments>3</experiments>
</comment>
<comment type="interaction">
    <interactant intactId="EBI-8473670">
        <id>O95447</id>
    </interactant>
    <interactant intactId="EBI-739648">
        <id>Q14533</id>
        <label>KRT81</label>
    </interactant>
    <organismsDiffer>false</organismsDiffer>
    <experiments>3</experiments>
</comment>
<comment type="interaction">
    <interactant intactId="EBI-8473670">
        <id>O95447</id>
    </interactant>
    <interactant intactId="EBI-372942">
        <id>Q13287</id>
        <label>NMI</label>
    </interactant>
    <organismsDiffer>false</organismsDiffer>
    <experiments>6</experiments>
</comment>
<comment type="interaction">
    <interactant intactId="EBI-8473670">
        <id>O95447</id>
    </interactant>
    <interactant intactId="EBI-740845">
        <id>Q96AQ6</id>
        <label>PBXIP1</label>
    </interactant>
    <organismsDiffer>false</organismsDiffer>
    <experiments>3</experiments>
</comment>
<comment type="interaction">
    <interactant intactId="EBI-8473670">
        <id>O95447</id>
    </interactant>
    <interactant intactId="EBI-752074">
        <id>P41219</id>
        <label>PRPH</label>
    </interactant>
    <organismsDiffer>false</organismsDiffer>
    <experiments>3</experiments>
</comment>
<comment type="interaction">
    <interactant intactId="EBI-8473670">
        <id>O95447</id>
    </interactant>
    <interactant intactId="EBI-1105213">
        <id>Q9UBB9</id>
        <label>TFIP11</label>
    </interactant>
    <organismsDiffer>false</organismsDiffer>
    <experiments>6</experiments>
</comment>
<comment type="interaction">
    <interactant intactId="EBI-8473670">
        <id>O95447</id>
    </interactant>
    <interactant intactId="EBI-355607">
        <id>P06753</id>
        <label>TPM3</label>
    </interactant>
    <organismsDiffer>false</organismsDiffer>
    <experiments>4</experiments>
</comment>
<comment type="interaction">
    <interactant intactId="EBI-8473670">
        <id>O95447</id>
    </interactant>
    <interactant intactId="EBI-10184033">
        <id>Q5VU62</id>
        <label>TPM3</label>
    </interactant>
    <organismsDiffer>false</organismsDiffer>
    <experiments>3</experiments>
</comment>
<comment type="interaction">
    <interactant intactId="EBI-8473670">
        <id>O95447</id>
    </interactant>
    <interactant intactId="EBI-10241197">
        <id>Q3SY00</id>
        <label>TSGA10IP</label>
    </interactant>
    <organismsDiffer>false</organismsDiffer>
    <experiments>3</experiments>
</comment>
<comment type="interaction">
    <interactant intactId="EBI-8473670">
        <id>O95447</id>
    </interactant>
    <interactant intactId="EBI-720609">
        <id>O76024</id>
        <label>WFS1</label>
    </interactant>
    <organismsDiffer>false</organismsDiffer>
    <experiments>3</experiments>
</comment>
<comment type="interaction">
    <interactant intactId="EBI-8473670">
        <id>O95447</id>
    </interactant>
    <interactant intactId="EBI-10183064">
        <id>Q8N5A5-2</id>
        <label>ZGPAT</label>
    </interactant>
    <organismsDiffer>false</organismsDiffer>
    <experiments>3</experiments>
</comment>
<comment type="similarity">
    <text evidence="4">Belongs to the LCA5 family.</text>
</comment>
<comment type="sequence caution" evidence="4">
    <conflict type="erroneous initiation">
        <sequence resource="EMBL-CDS" id="CAB90455"/>
    </conflict>
</comment>
<feature type="chain" id="PRO_0000079507" description="Lebercilin-like protein">
    <location>
        <begin position="1"/>
        <end position="670"/>
    </location>
</feature>
<feature type="region of interest" description="Disordered" evidence="2">
    <location>
        <begin position="30"/>
        <end position="51"/>
    </location>
</feature>
<feature type="region of interest" description="Disordered" evidence="2">
    <location>
        <begin position="374"/>
        <end position="393"/>
    </location>
</feature>
<feature type="region of interest" description="Disordered" evidence="2">
    <location>
        <begin position="495"/>
        <end position="516"/>
    </location>
</feature>
<feature type="region of interest" description="Disordered" evidence="2">
    <location>
        <begin position="557"/>
        <end position="580"/>
    </location>
</feature>
<feature type="region of interest" description="Disordered" evidence="2">
    <location>
        <begin position="609"/>
        <end position="670"/>
    </location>
</feature>
<feature type="coiled-coil region" evidence="1">
    <location>
        <begin position="148"/>
        <end position="259"/>
    </location>
</feature>
<feature type="coiled-coil region" evidence="1">
    <location>
        <begin position="305"/>
        <end position="336"/>
    </location>
</feature>
<feature type="coiled-coil region" evidence="1">
    <location>
        <begin position="420"/>
        <end position="440"/>
    </location>
</feature>
<feature type="compositionally biased region" description="Polar residues" evidence="2">
    <location>
        <begin position="38"/>
        <end position="51"/>
    </location>
</feature>
<feature type="compositionally biased region" description="Basic and acidic residues" evidence="2">
    <location>
        <begin position="560"/>
        <end position="572"/>
    </location>
</feature>
<feature type="compositionally biased region" description="Basic and acidic residues" evidence="2">
    <location>
        <begin position="621"/>
        <end position="632"/>
    </location>
</feature>
<feature type="compositionally biased region" description="Polar residues" evidence="2">
    <location>
        <begin position="651"/>
        <end position="662"/>
    </location>
</feature>
<feature type="sequence variant" id="VAR_021947" description="In dbSNP:rs2837029.">
    <original>G</original>
    <variation>S</variation>
    <location>
        <position position="17"/>
    </location>
</feature>
<feature type="sequence variant" id="VAR_042739" description="In dbSNP:rs11558767." evidence="3">
    <original>G</original>
    <variation>S</variation>
    <location>
        <position position="547"/>
    </location>
</feature>
<reference key="1">
    <citation type="submission" date="1999-01" db="EMBL/GenBank/DDBJ databases">
        <authorList>
            <person name="Rump A."/>
            <person name="Taudien S."/>
            <person name="Dagand E."/>
            <person name="Hildmann T."/>
            <person name="Nordsiek G."/>
            <person name="Drescher B."/>
            <person name="Schattevoy R."/>
            <person name="Weber J."/>
            <person name="Schilling M."/>
            <person name="Menzel U."/>
            <person name="Yaspo M.-L."/>
            <person name="Rosenthal A."/>
        </authorList>
    </citation>
    <scope>NUCLEOTIDE SEQUENCE [GENOMIC DNA]</scope>
</reference>
<reference key="2">
    <citation type="journal article" date="2000" name="Nature">
        <title>The DNA sequence of human chromosome 21.</title>
        <authorList>
            <person name="Hattori M."/>
            <person name="Fujiyama A."/>
            <person name="Taylor T.D."/>
            <person name="Watanabe H."/>
            <person name="Yada T."/>
            <person name="Park H.-S."/>
            <person name="Toyoda A."/>
            <person name="Ishii K."/>
            <person name="Totoki Y."/>
            <person name="Choi D.-K."/>
            <person name="Groner Y."/>
            <person name="Soeda E."/>
            <person name="Ohki M."/>
            <person name="Takagi T."/>
            <person name="Sakaki Y."/>
            <person name="Taudien S."/>
            <person name="Blechschmidt K."/>
            <person name="Polley A."/>
            <person name="Menzel U."/>
            <person name="Delabar J."/>
            <person name="Kumpf K."/>
            <person name="Lehmann R."/>
            <person name="Patterson D."/>
            <person name="Reichwald K."/>
            <person name="Rump A."/>
            <person name="Schillhabel M."/>
            <person name="Schudy A."/>
            <person name="Zimmermann W."/>
            <person name="Rosenthal A."/>
            <person name="Kudoh J."/>
            <person name="Shibuya K."/>
            <person name="Kawasaki K."/>
            <person name="Asakawa S."/>
            <person name="Shintani A."/>
            <person name="Sasaki T."/>
            <person name="Nagamine K."/>
            <person name="Mitsuyama S."/>
            <person name="Antonarakis S.E."/>
            <person name="Minoshima S."/>
            <person name="Shimizu N."/>
            <person name="Nordsiek G."/>
            <person name="Hornischer K."/>
            <person name="Brandt P."/>
            <person name="Scharfe M."/>
            <person name="Schoen O."/>
            <person name="Desario A."/>
            <person name="Reichelt J."/>
            <person name="Kauer G."/>
            <person name="Bloecker H."/>
            <person name="Ramser J."/>
            <person name="Beck A."/>
            <person name="Klages S."/>
            <person name="Hennig S."/>
            <person name="Riesselmann L."/>
            <person name="Dagand E."/>
            <person name="Wehrmeyer S."/>
            <person name="Borzym K."/>
            <person name="Gardiner K."/>
            <person name="Nizetic D."/>
            <person name="Francis F."/>
            <person name="Lehrach H."/>
            <person name="Reinhardt R."/>
            <person name="Yaspo M.-L."/>
        </authorList>
    </citation>
    <scope>NUCLEOTIDE SEQUENCE [LARGE SCALE GENOMIC DNA]</scope>
</reference>
<reference key="3">
    <citation type="submission" date="2005-09" db="EMBL/GenBank/DDBJ databases">
        <authorList>
            <person name="Mural R.J."/>
            <person name="Istrail S."/>
            <person name="Sutton G.G."/>
            <person name="Florea L."/>
            <person name="Halpern A.L."/>
            <person name="Mobarry C.M."/>
            <person name="Lippert R."/>
            <person name="Walenz B."/>
            <person name="Shatkay H."/>
            <person name="Dew I."/>
            <person name="Miller J.R."/>
            <person name="Flanigan M.J."/>
            <person name="Edwards N.J."/>
            <person name="Bolanos R."/>
            <person name="Fasulo D."/>
            <person name="Halldorsson B.V."/>
            <person name="Hannenhalli S."/>
            <person name="Turner R."/>
            <person name="Yooseph S."/>
            <person name="Lu F."/>
            <person name="Nusskern D.R."/>
            <person name="Shue B.C."/>
            <person name="Zheng X.H."/>
            <person name="Zhong F."/>
            <person name="Delcher A.L."/>
            <person name="Huson D.H."/>
            <person name="Kravitz S.A."/>
            <person name="Mouchard L."/>
            <person name="Reinert K."/>
            <person name="Remington K.A."/>
            <person name="Clark A.G."/>
            <person name="Waterman M.S."/>
            <person name="Eichler E.E."/>
            <person name="Adams M.D."/>
            <person name="Hunkapiller M.W."/>
            <person name="Myers E.W."/>
            <person name="Venter J.C."/>
        </authorList>
    </citation>
    <scope>NUCLEOTIDE SEQUENCE [LARGE SCALE GENOMIC DNA]</scope>
</reference>
<reference key="4">
    <citation type="journal article" date="2004" name="Genome Res.">
        <title>The status, quality, and expansion of the NIH full-length cDNA project: the Mammalian Gene Collection (MGC).</title>
        <authorList>
            <consortium name="The MGC Project Team"/>
        </authorList>
    </citation>
    <scope>NUCLEOTIDE SEQUENCE [LARGE SCALE MRNA]</scope>
    <scope>VARIANT SER-547</scope>
    <source>
        <tissue>Testis</tissue>
    </source>
</reference>
<name>LCA5L_HUMAN</name>
<gene>
    <name type="primary">LCA5L</name>
    <name type="synonym">C21orf13</name>
</gene>
<sequence length="670" mass="76505">MSLADLTKTNIDEHFFGVALENNRRSAACKRSPGTGDFSRNSNASNKSVDYSRSQCSCGSLSSQYDYSEDFLCDCSEKAINRNYLKQPVVKEKEKKKYNVSKISQSKGQKEISVEKKHTWNASLFNSQIHMIAQRRDAMAHRILSARLHKIKGLKNELADMHHKLEAILTENQFLKQLQLRHLKAIGKYENSQNNLPQIMAKHQNEVKNLRQLLRKSQEKERTLSRKLRETDSQLLKTKDILQALQKLSEDKNLAEREELTHKLSIITTKMDANDKKIQSLEKQLRLNCRAFSRQLAIETRKTLAAQTATKTLQVEVKHLQQKLKEKDRELEIKNIYSHRILKNLHDTEDYPKVSSTKSVQADRKILPFTSMRHQGTQKSDVPPLTTKGKKATGNIDHKEKSTEINHEIPHCVNKLPKQEDSKRKYEDLSGEEKHLEVQILLENTGRQKDKKEDQEKKNIFVKEEQELPPKIIEVIHPERESNQEDVLVREKFKRSMQRNGVDDTLGKGTAPYTKGPLRQRRHYSFTEATENLHHGLPASGGPANAGNMRYSHSTGKHLSNREEMELEHSDSGYEPSFGKSSRIKVKDTTFRDKKSSLMEELFGSGYVLKTDQSSPGVAKGSEEPLQSKESHPLPPSQASTSHAFGDSKVTVVNSIKPSSPTEGKRKIII</sequence>
<keyword id="KW-0175">Coiled coil</keyword>
<keyword id="KW-1267">Proteomics identification</keyword>
<keyword id="KW-1185">Reference proteome</keyword>
<proteinExistence type="evidence at protein level"/>
<evidence type="ECO:0000255" key="1"/>
<evidence type="ECO:0000256" key="2">
    <source>
        <dbReference type="SAM" id="MobiDB-lite"/>
    </source>
</evidence>
<evidence type="ECO:0000269" key="3">
    <source>
    </source>
</evidence>
<evidence type="ECO:0000305" key="4"/>
<protein>
    <recommendedName>
        <fullName>Lebercilin-like protein</fullName>
    </recommendedName>
    <alternativeName>
        <fullName>Leber congenital amaurosis 5-like protein</fullName>
    </alternativeName>
</protein>
<dbReference type="EMBL" id="AF121781">
    <property type="protein sequence ID" value="AAD12066.1"/>
    <property type="molecule type" value="Genomic_DNA"/>
</dbReference>
<dbReference type="EMBL" id="AL163279">
    <property type="protein sequence ID" value="CAB90455.1"/>
    <property type="status" value="ALT_INIT"/>
    <property type="molecule type" value="Genomic_DNA"/>
</dbReference>
<dbReference type="EMBL" id="CH471079">
    <property type="protein sequence ID" value="EAX09641.1"/>
    <property type="molecule type" value="Genomic_DNA"/>
</dbReference>
<dbReference type="EMBL" id="CH471079">
    <property type="protein sequence ID" value="EAX09642.1"/>
    <property type="molecule type" value="Genomic_DNA"/>
</dbReference>
<dbReference type="EMBL" id="CH471079">
    <property type="protein sequence ID" value="EAX09644.1"/>
    <property type="molecule type" value="Genomic_DNA"/>
</dbReference>
<dbReference type="EMBL" id="BC031059">
    <property type="protein sequence ID" value="AAH31059.1"/>
    <property type="molecule type" value="mRNA"/>
</dbReference>
<dbReference type="EMBL" id="BC043006">
    <property type="protein sequence ID" value="AAH43006.1"/>
    <property type="molecule type" value="mRNA"/>
</dbReference>
<dbReference type="CCDS" id="CCDS13665.1"/>
<dbReference type="RefSeq" id="NP_001371214.1">
    <property type="nucleotide sequence ID" value="NM_001384285.1"/>
</dbReference>
<dbReference type="RefSeq" id="NP_001371215.1">
    <property type="nucleotide sequence ID" value="NM_001384286.1"/>
</dbReference>
<dbReference type="RefSeq" id="NP_001371216.1">
    <property type="nucleotide sequence ID" value="NM_001384287.1"/>
</dbReference>
<dbReference type="RefSeq" id="NP_001371217.1">
    <property type="nucleotide sequence ID" value="NM_001384288.1"/>
</dbReference>
<dbReference type="RefSeq" id="NP_001371218.1">
    <property type="nucleotide sequence ID" value="NM_001384289.1"/>
</dbReference>
<dbReference type="RefSeq" id="NP_001371220.1">
    <property type="nucleotide sequence ID" value="NM_001384291.1"/>
</dbReference>
<dbReference type="RefSeq" id="NP_689718.1">
    <property type="nucleotide sequence ID" value="NM_152505.4"/>
</dbReference>
<dbReference type="RefSeq" id="XP_005260983.1">
    <property type="nucleotide sequence ID" value="XM_005260926.1"/>
</dbReference>
<dbReference type="RefSeq" id="XP_006724030.1">
    <property type="nucleotide sequence ID" value="XM_006723967.1"/>
</dbReference>
<dbReference type="RefSeq" id="XP_047296652.1">
    <property type="nucleotide sequence ID" value="XM_047440696.1"/>
</dbReference>
<dbReference type="RefSeq" id="XP_047296653.1">
    <property type="nucleotide sequence ID" value="XM_047440697.1"/>
</dbReference>
<dbReference type="SMR" id="O95447"/>
<dbReference type="BioGRID" id="127258">
    <property type="interactions" value="31"/>
</dbReference>
<dbReference type="FunCoup" id="O95447">
    <property type="interactions" value="51"/>
</dbReference>
<dbReference type="IntAct" id="O95447">
    <property type="interactions" value="27"/>
</dbReference>
<dbReference type="MINT" id="O95447"/>
<dbReference type="STRING" id="9606.ENSP00000351008"/>
<dbReference type="CarbonylDB" id="O95447"/>
<dbReference type="GlyGen" id="O95447">
    <property type="glycosylation" value="1 site, 1 O-linked glycan (1 site)"/>
</dbReference>
<dbReference type="iPTMnet" id="O95447"/>
<dbReference type="PhosphoSitePlus" id="O95447"/>
<dbReference type="BioMuta" id="LCA5L"/>
<dbReference type="jPOST" id="O95447"/>
<dbReference type="MassIVE" id="O95447"/>
<dbReference type="PaxDb" id="9606-ENSP00000351008"/>
<dbReference type="PeptideAtlas" id="O95447"/>
<dbReference type="ProteomicsDB" id="50882"/>
<dbReference type="Antibodypedia" id="8988">
    <property type="antibodies" value="124 antibodies from 17 providers"/>
</dbReference>
<dbReference type="DNASU" id="150082"/>
<dbReference type="Ensembl" id="ENST00000288350.8">
    <property type="protein sequence ID" value="ENSP00000288350.3"/>
    <property type="gene ID" value="ENSG00000157578.14"/>
</dbReference>
<dbReference type="Ensembl" id="ENST00000358268.6">
    <property type="protein sequence ID" value="ENSP00000351008.2"/>
    <property type="gene ID" value="ENSG00000157578.14"/>
</dbReference>
<dbReference type="Ensembl" id="ENST00000380671.6">
    <property type="protein sequence ID" value="ENSP00000370046.2"/>
    <property type="gene ID" value="ENSG00000157578.14"/>
</dbReference>
<dbReference type="GeneID" id="150082"/>
<dbReference type="KEGG" id="hsa:150082"/>
<dbReference type="MANE-Select" id="ENST00000288350.8">
    <property type="protein sequence ID" value="ENSP00000288350.3"/>
    <property type="RefSeq nucleotide sequence ID" value="NM_152505.4"/>
    <property type="RefSeq protein sequence ID" value="NP_689718.1"/>
</dbReference>
<dbReference type="UCSC" id="uc002yxv.4">
    <property type="organism name" value="human"/>
</dbReference>
<dbReference type="AGR" id="HGNC:1255"/>
<dbReference type="CTD" id="150082"/>
<dbReference type="GeneCards" id="LCA5L"/>
<dbReference type="HGNC" id="HGNC:1255">
    <property type="gene designation" value="LCA5L"/>
</dbReference>
<dbReference type="HPA" id="ENSG00000157578">
    <property type="expression patterns" value="Tissue enriched (testis)"/>
</dbReference>
<dbReference type="neXtProt" id="NX_O95447"/>
<dbReference type="OpenTargets" id="ENSG00000157578"/>
<dbReference type="PharmGKB" id="PA162393809"/>
<dbReference type="VEuPathDB" id="HostDB:ENSG00000157578"/>
<dbReference type="eggNOG" id="ENOG502QQSE">
    <property type="taxonomic scope" value="Eukaryota"/>
</dbReference>
<dbReference type="GeneTree" id="ENSGT00560000077266"/>
<dbReference type="HOGENOM" id="CLU_026861_0_0_1"/>
<dbReference type="InParanoid" id="O95447"/>
<dbReference type="OMA" id="MKHQETQ"/>
<dbReference type="OrthoDB" id="2123794at2759"/>
<dbReference type="PAN-GO" id="O95447">
    <property type="GO annotations" value="2 GO annotations based on evolutionary models"/>
</dbReference>
<dbReference type="PhylomeDB" id="O95447"/>
<dbReference type="TreeFam" id="TF323306"/>
<dbReference type="PathwayCommons" id="O95447"/>
<dbReference type="SignaLink" id="O95447"/>
<dbReference type="BioGRID-ORCS" id="150082">
    <property type="hits" value="17 hits in 1146 CRISPR screens"/>
</dbReference>
<dbReference type="GenomeRNAi" id="150082"/>
<dbReference type="Pharos" id="O95447">
    <property type="development level" value="Tdark"/>
</dbReference>
<dbReference type="PRO" id="PR:O95447"/>
<dbReference type="Proteomes" id="UP000005640">
    <property type="component" value="Chromosome 21"/>
</dbReference>
<dbReference type="RNAct" id="O95447">
    <property type="molecule type" value="protein"/>
</dbReference>
<dbReference type="Bgee" id="ENSG00000157578">
    <property type="expression patterns" value="Expressed in left testis and 114 other cell types or tissues"/>
</dbReference>
<dbReference type="ExpressionAtlas" id="O95447">
    <property type="expression patterns" value="baseline and differential"/>
</dbReference>
<dbReference type="GO" id="GO:0005930">
    <property type="term" value="C:axoneme"/>
    <property type="evidence" value="ECO:0000318"/>
    <property type="project" value="GO_Central"/>
</dbReference>
<dbReference type="GO" id="GO:0042073">
    <property type="term" value="P:intraciliary transport"/>
    <property type="evidence" value="ECO:0000318"/>
    <property type="project" value="GO_Central"/>
</dbReference>
<dbReference type="InterPro" id="IPR026188">
    <property type="entry name" value="Lebercilin-like"/>
</dbReference>
<dbReference type="InterPro" id="IPR028933">
    <property type="entry name" value="Lebercilin_dom"/>
</dbReference>
<dbReference type="PANTHER" id="PTHR16650">
    <property type="entry name" value="C21ORF13-RELATED"/>
    <property type="match status" value="1"/>
</dbReference>
<dbReference type="PANTHER" id="PTHR16650:SF9">
    <property type="entry name" value="LEBERCILIN-LIKE PROTEIN"/>
    <property type="match status" value="1"/>
</dbReference>
<dbReference type="Pfam" id="PF15619">
    <property type="entry name" value="Lebercilin"/>
    <property type="match status" value="1"/>
</dbReference>
<organism>
    <name type="scientific">Homo sapiens</name>
    <name type="common">Human</name>
    <dbReference type="NCBI Taxonomy" id="9606"/>
    <lineage>
        <taxon>Eukaryota</taxon>
        <taxon>Metazoa</taxon>
        <taxon>Chordata</taxon>
        <taxon>Craniata</taxon>
        <taxon>Vertebrata</taxon>
        <taxon>Euteleostomi</taxon>
        <taxon>Mammalia</taxon>
        <taxon>Eutheria</taxon>
        <taxon>Euarchontoglires</taxon>
        <taxon>Primates</taxon>
        <taxon>Haplorrhini</taxon>
        <taxon>Catarrhini</taxon>
        <taxon>Hominidae</taxon>
        <taxon>Homo</taxon>
    </lineage>
</organism>
<accession>O95447</accession>
<accession>D3DSI0</accession>
<accession>Q3ZCT0</accession>